<gene>
    <name evidence="1" type="primary">rpoZ</name>
    <name type="ordered locus">Cgl1605</name>
    <name type="ordered locus">cg1809</name>
</gene>
<reference key="1">
    <citation type="journal article" date="2003" name="Appl. Microbiol. Biotechnol.">
        <title>The Corynebacterium glutamicum genome: features and impacts on biotechnological processes.</title>
        <authorList>
            <person name="Ikeda M."/>
            <person name="Nakagawa S."/>
        </authorList>
    </citation>
    <scope>NUCLEOTIDE SEQUENCE [LARGE SCALE GENOMIC DNA]</scope>
    <source>
        <strain>ATCC 13032 / DSM 20300 / JCM 1318 / BCRC 11384 / CCUG 27702 / LMG 3730 / NBRC 12168 / NCIMB 10025 / NRRL B-2784 / 534</strain>
    </source>
</reference>
<reference key="2">
    <citation type="journal article" date="2003" name="J. Biotechnol.">
        <title>The complete Corynebacterium glutamicum ATCC 13032 genome sequence and its impact on the production of L-aspartate-derived amino acids and vitamins.</title>
        <authorList>
            <person name="Kalinowski J."/>
            <person name="Bathe B."/>
            <person name="Bartels D."/>
            <person name="Bischoff N."/>
            <person name="Bott M."/>
            <person name="Burkovski A."/>
            <person name="Dusch N."/>
            <person name="Eggeling L."/>
            <person name="Eikmanns B.J."/>
            <person name="Gaigalat L."/>
            <person name="Goesmann A."/>
            <person name="Hartmann M."/>
            <person name="Huthmacher K."/>
            <person name="Kraemer R."/>
            <person name="Linke B."/>
            <person name="McHardy A.C."/>
            <person name="Meyer F."/>
            <person name="Moeckel B."/>
            <person name="Pfefferle W."/>
            <person name="Puehler A."/>
            <person name="Rey D.A."/>
            <person name="Rueckert C."/>
            <person name="Rupp O."/>
            <person name="Sahm H."/>
            <person name="Wendisch V.F."/>
            <person name="Wiegraebe I."/>
            <person name="Tauch A."/>
        </authorList>
    </citation>
    <scope>NUCLEOTIDE SEQUENCE [LARGE SCALE GENOMIC DNA]</scope>
    <source>
        <strain>ATCC 13032 / DSM 20300 / JCM 1318 / BCRC 11384 / CCUG 27702 / LMG 3730 / NBRC 12168 / NCIMB 10025 / NRRL B-2784 / 534</strain>
    </source>
</reference>
<name>RPOZ_CORGL</name>
<feature type="chain" id="PRO_0000128932" description="DNA-directed RNA polymerase subunit omega">
    <location>
        <begin position="1"/>
        <end position="97"/>
    </location>
</feature>
<dbReference type="EC" id="2.7.7.6" evidence="1"/>
<dbReference type="EMBL" id="BA000036">
    <property type="protein sequence ID" value="BAB98998.1"/>
    <property type="molecule type" value="Genomic_DNA"/>
</dbReference>
<dbReference type="EMBL" id="BX927152">
    <property type="protein sequence ID" value="CAF21614.1"/>
    <property type="status" value="ALT_INIT"/>
    <property type="molecule type" value="Genomic_DNA"/>
</dbReference>
<dbReference type="RefSeq" id="NP_600819.1">
    <property type="nucleotide sequence ID" value="NC_003450.3"/>
</dbReference>
<dbReference type="SMR" id="Q8NQ43"/>
<dbReference type="STRING" id="196627.cg1809"/>
<dbReference type="KEGG" id="cgb:cg1809"/>
<dbReference type="KEGG" id="cgl:Cgl1605"/>
<dbReference type="PATRIC" id="fig|196627.13.peg.1567"/>
<dbReference type="eggNOG" id="COG1758">
    <property type="taxonomic scope" value="Bacteria"/>
</dbReference>
<dbReference type="HOGENOM" id="CLU_125406_1_1_11"/>
<dbReference type="OrthoDB" id="8481372at2"/>
<dbReference type="BioCyc" id="CORYNE:G18NG-11190-MONOMER"/>
<dbReference type="Proteomes" id="UP000000582">
    <property type="component" value="Chromosome"/>
</dbReference>
<dbReference type="Proteomes" id="UP000001009">
    <property type="component" value="Chromosome"/>
</dbReference>
<dbReference type="GO" id="GO:0000428">
    <property type="term" value="C:DNA-directed RNA polymerase complex"/>
    <property type="evidence" value="ECO:0007669"/>
    <property type="project" value="UniProtKB-KW"/>
</dbReference>
<dbReference type="GO" id="GO:0003677">
    <property type="term" value="F:DNA binding"/>
    <property type="evidence" value="ECO:0007669"/>
    <property type="project" value="UniProtKB-UniRule"/>
</dbReference>
<dbReference type="GO" id="GO:0003899">
    <property type="term" value="F:DNA-directed RNA polymerase activity"/>
    <property type="evidence" value="ECO:0007669"/>
    <property type="project" value="UniProtKB-UniRule"/>
</dbReference>
<dbReference type="GO" id="GO:0006351">
    <property type="term" value="P:DNA-templated transcription"/>
    <property type="evidence" value="ECO:0007669"/>
    <property type="project" value="UniProtKB-UniRule"/>
</dbReference>
<dbReference type="Gene3D" id="3.90.940.10">
    <property type="match status" value="1"/>
</dbReference>
<dbReference type="HAMAP" id="MF_00366">
    <property type="entry name" value="RNApol_bact_RpoZ"/>
    <property type="match status" value="1"/>
</dbReference>
<dbReference type="InterPro" id="IPR003716">
    <property type="entry name" value="DNA-dir_RNA_pol_omega"/>
</dbReference>
<dbReference type="InterPro" id="IPR006110">
    <property type="entry name" value="Pol_omega/Rpo6/RPB6"/>
</dbReference>
<dbReference type="InterPro" id="IPR036161">
    <property type="entry name" value="RPB6/omega-like_sf"/>
</dbReference>
<dbReference type="NCBIfam" id="TIGR00690">
    <property type="entry name" value="rpoZ"/>
    <property type="match status" value="1"/>
</dbReference>
<dbReference type="PANTHER" id="PTHR34476">
    <property type="entry name" value="DNA-DIRECTED RNA POLYMERASE SUBUNIT OMEGA"/>
    <property type="match status" value="1"/>
</dbReference>
<dbReference type="PANTHER" id="PTHR34476:SF1">
    <property type="entry name" value="DNA-DIRECTED RNA POLYMERASE SUBUNIT OMEGA"/>
    <property type="match status" value="1"/>
</dbReference>
<dbReference type="Pfam" id="PF01192">
    <property type="entry name" value="RNA_pol_Rpb6"/>
    <property type="match status" value="1"/>
</dbReference>
<dbReference type="SMART" id="SM01409">
    <property type="entry name" value="RNA_pol_Rpb6"/>
    <property type="match status" value="1"/>
</dbReference>
<dbReference type="SUPFAM" id="SSF63562">
    <property type="entry name" value="RPB6/omega subunit-like"/>
    <property type="match status" value="1"/>
</dbReference>
<accession>Q8NQ43</accession>
<evidence type="ECO:0000255" key="1">
    <source>
        <dbReference type="HAMAP-Rule" id="MF_00366"/>
    </source>
</evidence>
<evidence type="ECO:0000305" key="2"/>
<protein>
    <recommendedName>
        <fullName evidence="1">DNA-directed RNA polymerase subunit omega</fullName>
        <shortName evidence="1">RNAP omega subunit</shortName>
        <ecNumber evidence="1">2.7.7.6</ecNumber>
    </recommendedName>
    <alternativeName>
        <fullName evidence="1">RNA polymerase omega subunit</fullName>
    </alternativeName>
    <alternativeName>
        <fullName evidence="1">Transcriptase subunit omega</fullName>
    </alternativeName>
</protein>
<comment type="function">
    <text evidence="1">Promotes RNA polymerase assembly. Latches the N- and C-terminal regions of the beta' subunit thereby facilitating its interaction with the beta and alpha subunits.</text>
</comment>
<comment type="catalytic activity">
    <reaction evidence="1">
        <text>RNA(n) + a ribonucleoside 5'-triphosphate = RNA(n+1) + diphosphate</text>
        <dbReference type="Rhea" id="RHEA:21248"/>
        <dbReference type="Rhea" id="RHEA-COMP:14527"/>
        <dbReference type="Rhea" id="RHEA-COMP:17342"/>
        <dbReference type="ChEBI" id="CHEBI:33019"/>
        <dbReference type="ChEBI" id="CHEBI:61557"/>
        <dbReference type="ChEBI" id="CHEBI:140395"/>
        <dbReference type="EC" id="2.7.7.6"/>
    </reaction>
</comment>
<comment type="subunit">
    <text evidence="1">The RNAP catalytic core consists of 2 alpha, 1 beta, 1 beta' and 1 omega subunit. When a sigma factor is associated with the core the holoenzyme is formed, which can initiate transcription.</text>
</comment>
<comment type="similarity">
    <text evidence="1">Belongs to the RNA polymerase subunit omega family.</text>
</comment>
<comment type="sequence caution" evidence="2">
    <conflict type="erroneous initiation">
        <sequence resource="EMBL-CDS" id="CAF21614"/>
    </conflict>
</comment>
<organism>
    <name type="scientific">Corynebacterium glutamicum (strain ATCC 13032 / DSM 20300 / JCM 1318 / BCRC 11384 / CCUG 27702 / LMG 3730 / NBRC 12168 / NCIMB 10025 / NRRL B-2784 / 534)</name>
    <dbReference type="NCBI Taxonomy" id="196627"/>
    <lineage>
        <taxon>Bacteria</taxon>
        <taxon>Bacillati</taxon>
        <taxon>Actinomycetota</taxon>
        <taxon>Actinomycetes</taxon>
        <taxon>Mycobacteriales</taxon>
        <taxon>Corynebacteriaceae</taxon>
        <taxon>Corynebacterium</taxon>
    </lineage>
</organism>
<proteinExistence type="inferred from homology"/>
<sequence length="97" mass="10521">MSVTNVSNETNATKAVFDPPVGITAPPIDELLDKVTSKYALVIFAAKRARQINSFYHQADEGVFEFIGPLVTPQPGEKPLSIALREINAGLLDHEEG</sequence>
<keyword id="KW-0240">DNA-directed RNA polymerase</keyword>
<keyword id="KW-0548">Nucleotidyltransferase</keyword>
<keyword id="KW-1185">Reference proteome</keyword>
<keyword id="KW-0804">Transcription</keyword>
<keyword id="KW-0808">Transferase</keyword>